<organism>
    <name type="scientific">Lobularia maritima</name>
    <name type="common">Sweet alyssum</name>
    <name type="synonym">Alyssum maritimum</name>
    <dbReference type="NCBI Taxonomy" id="226051"/>
    <lineage>
        <taxon>Eukaryota</taxon>
        <taxon>Viridiplantae</taxon>
        <taxon>Streptophyta</taxon>
        <taxon>Embryophyta</taxon>
        <taxon>Tracheophyta</taxon>
        <taxon>Spermatophyta</taxon>
        <taxon>Magnoliopsida</taxon>
        <taxon>eudicotyledons</taxon>
        <taxon>Gunneridae</taxon>
        <taxon>Pentapetalae</taxon>
        <taxon>rosids</taxon>
        <taxon>malvids</taxon>
        <taxon>Brassicales</taxon>
        <taxon>Brassicaceae</taxon>
        <taxon>Anastaticeae</taxon>
        <taxon>Lobularia</taxon>
    </lineage>
</organism>
<sequence length="34" mass="3782">MEVNILAFIATALFILVPTAFLLIIYVKTVSQNN</sequence>
<name>PSBM_LOBMA</name>
<reference key="1">
    <citation type="submission" date="2007-03" db="EMBL/GenBank/DDBJ databases">
        <title>Sequencing analysis of Lobularia maritima chloroplast DNA.</title>
        <authorList>
            <person name="Hosouchi T."/>
            <person name="Tsuruoka H."/>
            <person name="Kotani H."/>
        </authorList>
    </citation>
    <scope>NUCLEOTIDE SEQUENCE [LARGE SCALE GENOMIC DNA]</scope>
</reference>
<feature type="chain" id="PRO_0000325741" description="Photosystem II reaction center protein M">
    <location>
        <begin position="1"/>
        <end position="34"/>
    </location>
</feature>
<feature type="transmembrane region" description="Helical" evidence="1">
    <location>
        <begin position="5"/>
        <end position="25"/>
    </location>
</feature>
<keyword id="KW-0150">Chloroplast</keyword>
<keyword id="KW-0472">Membrane</keyword>
<keyword id="KW-0602">Photosynthesis</keyword>
<keyword id="KW-0604">Photosystem II</keyword>
<keyword id="KW-0934">Plastid</keyword>
<keyword id="KW-0674">Reaction center</keyword>
<keyword id="KW-0793">Thylakoid</keyword>
<keyword id="KW-0812">Transmembrane</keyword>
<keyword id="KW-1133">Transmembrane helix</keyword>
<accession>A4QLI8</accession>
<comment type="function">
    <text evidence="1">One of the components of the core complex of photosystem II (PSII). PSII is a light-driven water:plastoquinone oxidoreductase that uses light energy to abstract electrons from H(2)O, generating O(2) and a proton gradient subsequently used for ATP formation. It consists of a core antenna complex that captures photons, and an electron transfer chain that converts photonic excitation into a charge separation. This subunit is found at the monomer-monomer interface.</text>
</comment>
<comment type="subunit">
    <text evidence="1">PSII is composed of 1 copy each of membrane proteins PsbA, PsbB, PsbC, PsbD, PsbE, PsbF, PsbH, PsbI, PsbJ, PsbK, PsbL, PsbM, PsbT, PsbX, PsbY, PsbZ, Psb30/Ycf12, at least 3 peripheral proteins of the oxygen-evolving complex and a large number of cofactors. It forms dimeric complexes.</text>
</comment>
<comment type="subcellular location">
    <subcellularLocation>
        <location evidence="1">Plastid</location>
        <location evidence="1">Chloroplast thylakoid membrane</location>
        <topology evidence="1">Single-pass membrane protein</topology>
    </subcellularLocation>
</comment>
<comment type="similarity">
    <text evidence="1">Belongs to the PsbM family.</text>
</comment>
<gene>
    <name evidence="1" type="primary">psbM</name>
</gene>
<dbReference type="EMBL" id="AP009375">
    <property type="protein sequence ID" value="BAF50543.1"/>
    <property type="molecule type" value="Genomic_DNA"/>
</dbReference>
<dbReference type="RefSeq" id="YP_001123719.1">
    <property type="nucleotide sequence ID" value="NC_009274.1"/>
</dbReference>
<dbReference type="SMR" id="A4QLI8"/>
<dbReference type="GeneID" id="4964882"/>
<dbReference type="GO" id="GO:0009535">
    <property type="term" value="C:chloroplast thylakoid membrane"/>
    <property type="evidence" value="ECO:0007669"/>
    <property type="project" value="UniProtKB-SubCell"/>
</dbReference>
<dbReference type="GO" id="GO:0009523">
    <property type="term" value="C:photosystem II"/>
    <property type="evidence" value="ECO:0007669"/>
    <property type="project" value="UniProtKB-KW"/>
</dbReference>
<dbReference type="GO" id="GO:0019684">
    <property type="term" value="P:photosynthesis, light reaction"/>
    <property type="evidence" value="ECO:0007669"/>
    <property type="project" value="InterPro"/>
</dbReference>
<dbReference type="HAMAP" id="MF_00438">
    <property type="entry name" value="PSII_PsbM"/>
    <property type="match status" value="1"/>
</dbReference>
<dbReference type="InterPro" id="IPR007826">
    <property type="entry name" value="PSII_PsbM"/>
</dbReference>
<dbReference type="InterPro" id="IPR037269">
    <property type="entry name" value="PSII_PsbM_sf"/>
</dbReference>
<dbReference type="NCBIfam" id="TIGR03038">
    <property type="entry name" value="PS_II_psbM"/>
    <property type="match status" value="1"/>
</dbReference>
<dbReference type="PANTHER" id="PTHR35774">
    <property type="entry name" value="PHOTOSYSTEM II REACTION CENTER PROTEIN M"/>
    <property type="match status" value="1"/>
</dbReference>
<dbReference type="PANTHER" id="PTHR35774:SF1">
    <property type="entry name" value="PHOTOSYSTEM II REACTION CENTER PROTEIN M"/>
    <property type="match status" value="1"/>
</dbReference>
<dbReference type="Pfam" id="PF05151">
    <property type="entry name" value="PsbM"/>
    <property type="match status" value="1"/>
</dbReference>
<dbReference type="SUPFAM" id="SSF161033">
    <property type="entry name" value="Photosystem II reaction center protein M, PsbM"/>
    <property type="match status" value="1"/>
</dbReference>
<proteinExistence type="inferred from homology"/>
<geneLocation type="chloroplast"/>
<evidence type="ECO:0000255" key="1">
    <source>
        <dbReference type="HAMAP-Rule" id="MF_00438"/>
    </source>
</evidence>
<protein>
    <recommendedName>
        <fullName evidence="1">Photosystem II reaction center protein M</fullName>
        <shortName evidence="1">PSII-M</shortName>
    </recommendedName>
</protein>